<comment type="function">
    <text evidence="1">Required for the first step of histidine biosynthesis. May allow the feedback regulation of ATP phosphoribosyltransferase activity by histidine.</text>
</comment>
<comment type="pathway">
    <text evidence="1">Amino-acid biosynthesis; L-histidine biosynthesis; L-histidine from 5-phospho-alpha-D-ribose 1-diphosphate: step 1/9.</text>
</comment>
<comment type="subunit">
    <text evidence="1">Heteromultimer composed of HisG and HisZ subunits.</text>
</comment>
<comment type="subcellular location">
    <subcellularLocation>
        <location evidence="1">Cytoplasm</location>
    </subcellularLocation>
</comment>
<comment type="miscellaneous">
    <text>This function is generally fulfilled by the C-terminal part of HisG, which is missing in some bacteria such as this one.</text>
</comment>
<comment type="similarity">
    <text evidence="1">Belongs to the class-II aminoacyl-tRNA synthetase family. HisZ subfamily.</text>
</comment>
<reference key="1">
    <citation type="journal article" date="2014" name="Stand. Genomic Sci.">
        <title>Complete genome sequence of Burkholderia phymatum STM815(T), a broad host range and efficient nitrogen-fixing symbiont of Mimosa species.</title>
        <authorList>
            <person name="Moulin L."/>
            <person name="Klonowska A."/>
            <person name="Caroline B."/>
            <person name="Booth K."/>
            <person name="Vriezen J.A."/>
            <person name="Melkonian R."/>
            <person name="James E.K."/>
            <person name="Young J.P."/>
            <person name="Bena G."/>
            <person name="Hauser L."/>
            <person name="Land M."/>
            <person name="Kyrpides N."/>
            <person name="Bruce D."/>
            <person name="Chain P."/>
            <person name="Copeland A."/>
            <person name="Pitluck S."/>
            <person name="Woyke T."/>
            <person name="Lizotte-Waniewski M."/>
            <person name="Bristow J."/>
            <person name="Riley M."/>
        </authorList>
    </citation>
    <scope>NUCLEOTIDE SEQUENCE [LARGE SCALE GENOMIC DNA]</scope>
    <source>
        <strain>DSM 17167 / CIP 108236 / LMG 21445 / STM815</strain>
    </source>
</reference>
<dbReference type="EMBL" id="CP001043">
    <property type="protein sequence ID" value="ACC70592.1"/>
    <property type="molecule type" value="Genomic_DNA"/>
</dbReference>
<dbReference type="RefSeq" id="WP_012400806.1">
    <property type="nucleotide sequence ID" value="NC_010622.1"/>
</dbReference>
<dbReference type="SMR" id="B2JIU1"/>
<dbReference type="STRING" id="391038.Bphy_1410"/>
<dbReference type="KEGG" id="bph:Bphy_1410"/>
<dbReference type="eggNOG" id="COG3705">
    <property type="taxonomic scope" value="Bacteria"/>
</dbReference>
<dbReference type="HOGENOM" id="CLU_025113_0_1_4"/>
<dbReference type="OrthoDB" id="9769617at2"/>
<dbReference type="UniPathway" id="UPA00031">
    <property type="reaction ID" value="UER00006"/>
</dbReference>
<dbReference type="Proteomes" id="UP000001192">
    <property type="component" value="Chromosome 1"/>
</dbReference>
<dbReference type="GO" id="GO:0005737">
    <property type="term" value="C:cytoplasm"/>
    <property type="evidence" value="ECO:0007669"/>
    <property type="project" value="UniProtKB-SubCell"/>
</dbReference>
<dbReference type="GO" id="GO:0004821">
    <property type="term" value="F:histidine-tRNA ligase activity"/>
    <property type="evidence" value="ECO:0007669"/>
    <property type="project" value="TreeGrafter"/>
</dbReference>
<dbReference type="GO" id="GO:0006427">
    <property type="term" value="P:histidyl-tRNA aminoacylation"/>
    <property type="evidence" value="ECO:0007669"/>
    <property type="project" value="TreeGrafter"/>
</dbReference>
<dbReference type="GO" id="GO:0000105">
    <property type="term" value="P:L-histidine biosynthetic process"/>
    <property type="evidence" value="ECO:0007669"/>
    <property type="project" value="UniProtKB-UniRule"/>
</dbReference>
<dbReference type="Gene3D" id="3.30.930.10">
    <property type="entry name" value="Bira Bifunctional Protein, Domain 2"/>
    <property type="match status" value="1"/>
</dbReference>
<dbReference type="HAMAP" id="MF_00125">
    <property type="entry name" value="HisZ"/>
    <property type="match status" value="1"/>
</dbReference>
<dbReference type="InterPro" id="IPR045864">
    <property type="entry name" value="aa-tRNA-synth_II/BPL/LPL"/>
</dbReference>
<dbReference type="InterPro" id="IPR041715">
    <property type="entry name" value="HisRS-like_core"/>
</dbReference>
<dbReference type="InterPro" id="IPR004516">
    <property type="entry name" value="HisRS/HisZ"/>
</dbReference>
<dbReference type="InterPro" id="IPR004517">
    <property type="entry name" value="HisZ"/>
</dbReference>
<dbReference type="NCBIfam" id="TIGR00443">
    <property type="entry name" value="hisZ_biosyn_reg"/>
    <property type="match status" value="1"/>
</dbReference>
<dbReference type="NCBIfam" id="NF008935">
    <property type="entry name" value="PRK12292.1-1"/>
    <property type="match status" value="1"/>
</dbReference>
<dbReference type="NCBIfam" id="NF009086">
    <property type="entry name" value="PRK12421.1"/>
    <property type="match status" value="1"/>
</dbReference>
<dbReference type="PANTHER" id="PTHR43707:SF1">
    <property type="entry name" value="HISTIDINE--TRNA LIGASE, MITOCHONDRIAL-RELATED"/>
    <property type="match status" value="1"/>
</dbReference>
<dbReference type="PANTHER" id="PTHR43707">
    <property type="entry name" value="HISTIDYL-TRNA SYNTHETASE"/>
    <property type="match status" value="1"/>
</dbReference>
<dbReference type="Pfam" id="PF13393">
    <property type="entry name" value="tRNA-synt_His"/>
    <property type="match status" value="1"/>
</dbReference>
<dbReference type="PIRSF" id="PIRSF001549">
    <property type="entry name" value="His-tRNA_synth"/>
    <property type="match status" value="1"/>
</dbReference>
<dbReference type="SUPFAM" id="SSF55681">
    <property type="entry name" value="Class II aaRS and biotin synthetases"/>
    <property type="match status" value="1"/>
</dbReference>
<accession>B2JIU1</accession>
<organism>
    <name type="scientific">Paraburkholderia phymatum (strain DSM 17167 / CIP 108236 / LMG 21445 / STM815)</name>
    <name type="common">Burkholderia phymatum</name>
    <dbReference type="NCBI Taxonomy" id="391038"/>
    <lineage>
        <taxon>Bacteria</taxon>
        <taxon>Pseudomonadati</taxon>
        <taxon>Pseudomonadota</taxon>
        <taxon>Betaproteobacteria</taxon>
        <taxon>Burkholderiales</taxon>
        <taxon>Burkholderiaceae</taxon>
        <taxon>Paraburkholderia</taxon>
    </lineage>
</organism>
<keyword id="KW-0028">Amino-acid biosynthesis</keyword>
<keyword id="KW-0963">Cytoplasm</keyword>
<keyword id="KW-0368">Histidine biosynthesis</keyword>
<keyword id="KW-1185">Reference proteome</keyword>
<sequence>MSTWLLPENIADVLPSEARKIEELRRRLLDRFRAYGYEMVMPPLLEYLESLLTGGGRDLNLRTFKLVDQLSGRTLGLRADITPQVARIDAHLLNRQGVTRLCYAGNVLHTRPRGLHATREQIQIGAEIYGHAGLEADLEIQQLMLDALHLAGLGRVRLDLCHAAVLGALVDSEPAAAELGESLYETLAGKDVPLLTELTANLPPVTRDALRALPTLYGDATVLEEARARLPNAPEISRALDDLAFLAQQVGGAEVMIDLADLRGYAYHSGVMFSAYVDGVPNAVARGGRYDKVGQAYGRARAATGFSLDLREVARISPIEARSSAILAPWQAGEALRTSVAALRDAGEVVIQALPGHDHALDEFACDRVLVERDGQWVVELKS</sequence>
<gene>
    <name evidence="1" type="primary">hisZ</name>
    <name type="ordered locus">Bphy_1410</name>
</gene>
<name>HISZ_PARP8</name>
<protein>
    <recommendedName>
        <fullName evidence="1">ATP phosphoribosyltransferase regulatory subunit</fullName>
    </recommendedName>
</protein>
<proteinExistence type="inferred from homology"/>
<evidence type="ECO:0000255" key="1">
    <source>
        <dbReference type="HAMAP-Rule" id="MF_00125"/>
    </source>
</evidence>
<feature type="chain" id="PRO_1000095452" description="ATP phosphoribosyltransferase regulatory subunit">
    <location>
        <begin position="1"/>
        <end position="383"/>
    </location>
</feature>